<sequence length="216" mass="21607">MQWTLVVPVKPLARAKSRLSDTAADAVRPGLALAFAQDTVAAALAATAVRGVVVVTDDPLAARELTALGARAVPEDPGGGPGDGLNAALRHGAALVRDVRPQSPVAALNADLPALRPGELTRVLGAAAAFPRAFLADAAGTGTTLLAAAPGHGLSPAFGPGSRTRHRRSGAVELDLTAVDSVRQDVDTGDDLRAALGLGVGPRTAAAAARLLIPGQ</sequence>
<organism>
    <name type="scientific">Streptomyces scabiei (strain 87.22)</name>
    <dbReference type="NCBI Taxonomy" id="680198"/>
    <lineage>
        <taxon>Bacteria</taxon>
        <taxon>Bacillati</taxon>
        <taxon>Actinomycetota</taxon>
        <taxon>Actinomycetes</taxon>
        <taxon>Kitasatosporales</taxon>
        <taxon>Streptomycetaceae</taxon>
        <taxon>Streptomyces</taxon>
    </lineage>
</organism>
<comment type="function">
    <text evidence="1">Guanylyltransferase that catalyzes the activation of phosphoenolpyruvate (PEP) as enolpyruvoyl-2-diphospho-5'-guanosine, via the condensation of PEP with GTP. It is involved in the biosynthesis of coenzyme F420, a hydride carrier cofactor.</text>
</comment>
<comment type="catalytic activity">
    <reaction evidence="1">
        <text>phosphoenolpyruvate + GTP + H(+) = enolpyruvoyl-2-diphospho-5'-guanosine + diphosphate</text>
        <dbReference type="Rhea" id="RHEA:30519"/>
        <dbReference type="ChEBI" id="CHEBI:15378"/>
        <dbReference type="ChEBI" id="CHEBI:33019"/>
        <dbReference type="ChEBI" id="CHEBI:37565"/>
        <dbReference type="ChEBI" id="CHEBI:58702"/>
        <dbReference type="ChEBI" id="CHEBI:143701"/>
        <dbReference type="EC" id="2.7.7.105"/>
    </reaction>
</comment>
<comment type="pathway">
    <text evidence="1">Cofactor biosynthesis; coenzyme F420 biosynthesis.</text>
</comment>
<comment type="similarity">
    <text evidence="1">Belongs to the CofC family.</text>
</comment>
<proteinExistence type="inferred from homology"/>
<gene>
    <name evidence="1" type="primary">fbiD</name>
    <name type="ordered locus">SCAB_26561</name>
</gene>
<keyword id="KW-0342">GTP-binding</keyword>
<keyword id="KW-0547">Nucleotide-binding</keyword>
<keyword id="KW-0548">Nucleotidyltransferase</keyword>
<keyword id="KW-1185">Reference proteome</keyword>
<keyword id="KW-0808">Transferase</keyword>
<protein>
    <recommendedName>
        <fullName evidence="1">Phosphoenolpyruvate guanylyltransferase</fullName>
        <shortName evidence="1">PEP guanylyltransferase</shortName>
        <ecNumber evidence="1">2.7.7.105</ecNumber>
    </recommendedName>
</protein>
<feature type="chain" id="PRO_0000398717" description="Phosphoenolpyruvate guanylyltransferase">
    <location>
        <begin position="1"/>
        <end position="216"/>
    </location>
</feature>
<feature type="binding site" evidence="1">
    <location>
        <position position="143"/>
    </location>
    <ligand>
        <name>phosphoenolpyruvate</name>
        <dbReference type="ChEBI" id="CHEBI:58702"/>
    </ligand>
</feature>
<feature type="binding site" evidence="1">
    <location>
        <position position="159"/>
    </location>
    <ligand>
        <name>phosphoenolpyruvate</name>
        <dbReference type="ChEBI" id="CHEBI:58702"/>
    </ligand>
</feature>
<feature type="binding site" evidence="1">
    <location>
        <position position="162"/>
    </location>
    <ligand>
        <name>phosphoenolpyruvate</name>
        <dbReference type="ChEBI" id="CHEBI:58702"/>
    </ligand>
</feature>
<name>FBID_STRSW</name>
<dbReference type="EC" id="2.7.7.105" evidence="1"/>
<dbReference type="EMBL" id="FN554889">
    <property type="protein sequence ID" value="CBG69760.1"/>
    <property type="molecule type" value="Genomic_DNA"/>
</dbReference>
<dbReference type="SMR" id="C9Z3U4"/>
<dbReference type="STRING" id="680198.SCAB_26561"/>
<dbReference type="GeneID" id="24313109"/>
<dbReference type="KEGG" id="scb:SCAB_26561"/>
<dbReference type="eggNOG" id="COG1920">
    <property type="taxonomic scope" value="Bacteria"/>
</dbReference>
<dbReference type="HOGENOM" id="CLU_076569_0_0_11"/>
<dbReference type="UniPathway" id="UPA00071"/>
<dbReference type="Proteomes" id="UP000001444">
    <property type="component" value="Chromosome"/>
</dbReference>
<dbReference type="GO" id="GO:0005525">
    <property type="term" value="F:GTP binding"/>
    <property type="evidence" value="ECO:0007669"/>
    <property type="project" value="UniProtKB-KW"/>
</dbReference>
<dbReference type="GO" id="GO:0043814">
    <property type="term" value="F:phospholactate guanylyltransferase activity"/>
    <property type="evidence" value="ECO:0007669"/>
    <property type="project" value="InterPro"/>
</dbReference>
<dbReference type="GO" id="GO:0052645">
    <property type="term" value="P:F420-0 metabolic process"/>
    <property type="evidence" value="ECO:0007669"/>
    <property type="project" value="UniProtKB-UniRule"/>
</dbReference>
<dbReference type="Gene3D" id="3.90.550.10">
    <property type="entry name" value="Spore Coat Polysaccharide Biosynthesis Protein SpsA, Chain A"/>
    <property type="match status" value="1"/>
</dbReference>
<dbReference type="HAMAP" id="MF_02114">
    <property type="entry name" value="CofC"/>
    <property type="match status" value="1"/>
</dbReference>
<dbReference type="InterPro" id="IPR002835">
    <property type="entry name" value="CofC"/>
</dbReference>
<dbReference type="InterPro" id="IPR025877">
    <property type="entry name" value="MobA-like_NTP_Trfase"/>
</dbReference>
<dbReference type="InterPro" id="IPR029044">
    <property type="entry name" value="Nucleotide-diphossugar_trans"/>
</dbReference>
<dbReference type="NCBIfam" id="TIGR03552">
    <property type="entry name" value="F420_cofC"/>
    <property type="match status" value="1"/>
</dbReference>
<dbReference type="PANTHER" id="PTHR40392">
    <property type="entry name" value="2-PHOSPHO-L-LACTATE GUANYLYLTRANSFERASE"/>
    <property type="match status" value="1"/>
</dbReference>
<dbReference type="PANTHER" id="PTHR40392:SF1">
    <property type="entry name" value="2-PHOSPHO-L-LACTATE GUANYLYLTRANSFERASE"/>
    <property type="match status" value="1"/>
</dbReference>
<dbReference type="Pfam" id="PF12804">
    <property type="entry name" value="NTP_transf_3"/>
    <property type="match status" value="1"/>
</dbReference>
<dbReference type="SUPFAM" id="SSF53448">
    <property type="entry name" value="Nucleotide-diphospho-sugar transferases"/>
    <property type="match status" value="1"/>
</dbReference>
<reference key="1">
    <citation type="journal article" date="2010" name="Mol. Plant Microbe Interact.">
        <title>Streptomyces scabies 87-22 contains a coronafacic acid-like biosynthetic cluster that contributes to plant-microbe interactions.</title>
        <authorList>
            <person name="Bignell D.R."/>
            <person name="Seipke R.F."/>
            <person name="Huguet-Tapia J.C."/>
            <person name="Chambers A.H."/>
            <person name="Parry R.J."/>
            <person name="Loria R."/>
        </authorList>
    </citation>
    <scope>NUCLEOTIDE SEQUENCE [LARGE SCALE GENOMIC DNA]</scope>
    <source>
        <strain>87.22</strain>
    </source>
</reference>
<evidence type="ECO:0000255" key="1">
    <source>
        <dbReference type="HAMAP-Rule" id="MF_02114"/>
    </source>
</evidence>
<accession>C9Z3U4</accession>